<keyword id="KW-0067">ATP-binding</keyword>
<keyword id="KW-0131">Cell cycle</keyword>
<keyword id="KW-0132">Cell division</keyword>
<keyword id="KW-0158">Chromosome</keyword>
<keyword id="KW-0227">DNA damage</keyword>
<keyword id="KW-0233">DNA recombination</keyword>
<keyword id="KW-0234">DNA repair</keyword>
<keyword id="KW-0498">Mitosis</keyword>
<keyword id="KW-0547">Nucleotide-binding</keyword>
<keyword id="KW-0539">Nucleus</keyword>
<keyword id="KW-1185">Reference proteome</keyword>
<keyword id="KW-0804">Transcription</keyword>
<keyword id="KW-0805">Transcription regulation</keyword>
<sequence length="632" mass="71349">MTQAEREQENGKEKEKEREKEKEKEKEQRGIKRPIAPPVIPEPLQEQIQSNFIVVLHPGSKTLRIGRATDTLPATVPHVIARRHKQTCQTRYEDGWLVREGLNKPESNEQRQNGLKMVDQAIWSKKMSNGVRRTPVSAEQARSYNRLIRPAGLDTSSRMKWTNTAHHPEHLVGEEALYVNPTDCYNVHWPISRGQLNVHGGVGGSLTAVLADLEAIWSHVIQKQLEIPLKDLKYYRCILLVPDIYNRHHIKELVNMLLLNMGFSAIVVHQESVCATFGSGLSSACVVDVGDQKTSLCCVEDGVSHRNSRLCLAYGGADVTRCFFWLLQRAGFPYRECQLSNRVDCILLQQLKETFCHLDQDISGLQDHEFRTRFPESPALLYQVRLGDEKLQAPMALFYPTTFGIVGQKMTSLQHRSQGDPEDPHDEHYLLGTQSKQDQSSKASAERKSLPKPPGFEGELSSQGGDPSERGGGAHGQDVELGHSQNDCLMGGAEMEEPPSALLSRKTAMTQFEGKALGLDKAILHSIDCCASDETKRKMYSSILVVGGGLLFHRAQEFLQHRILNKMPPSFRRVVESVEVITRPKDMDPRLISWKGGAVLACLDTTQEMWIHQREWQRFGVRMLRERAAFVW</sequence>
<dbReference type="EMBL" id="BT045342">
    <property type="protein sequence ID" value="ACI33604.1"/>
    <property type="molecule type" value="mRNA"/>
</dbReference>
<dbReference type="RefSeq" id="NP_001133630.1">
    <property type="nucleotide sequence ID" value="NM_001140158.1"/>
</dbReference>
<dbReference type="SMR" id="B5X2S3"/>
<dbReference type="STRING" id="8030.ENSSSAP00000029655"/>
<dbReference type="PaxDb" id="8030-ENSSSAP00000029655"/>
<dbReference type="Ensembl" id="ENSSSAT00070072427">
    <property type="protein sequence ID" value="ENSSSAP00070069238"/>
    <property type="gene ID" value="ENSSSAG00070045034"/>
</dbReference>
<dbReference type="GeneID" id="100195129"/>
<dbReference type="KEGG" id="sasa:100195129"/>
<dbReference type="CTD" id="93973"/>
<dbReference type="Proteomes" id="UP000087266">
    <property type="component" value="Chromosome ssa13"/>
</dbReference>
<dbReference type="GO" id="GO:0005694">
    <property type="term" value="C:chromosome"/>
    <property type="evidence" value="ECO:0007669"/>
    <property type="project" value="UniProtKB-SubCell"/>
</dbReference>
<dbReference type="GO" id="GO:0005634">
    <property type="term" value="C:nucleus"/>
    <property type="evidence" value="ECO:0007669"/>
    <property type="project" value="UniProtKB-SubCell"/>
</dbReference>
<dbReference type="GO" id="GO:0005524">
    <property type="term" value="F:ATP binding"/>
    <property type="evidence" value="ECO:0007669"/>
    <property type="project" value="UniProtKB-KW"/>
</dbReference>
<dbReference type="GO" id="GO:0051301">
    <property type="term" value="P:cell division"/>
    <property type="evidence" value="ECO:0007669"/>
    <property type="project" value="UniProtKB-KW"/>
</dbReference>
<dbReference type="GO" id="GO:0006310">
    <property type="term" value="P:DNA recombination"/>
    <property type="evidence" value="ECO:0007669"/>
    <property type="project" value="UniProtKB-KW"/>
</dbReference>
<dbReference type="GO" id="GO:0006281">
    <property type="term" value="P:DNA repair"/>
    <property type="evidence" value="ECO:0007669"/>
    <property type="project" value="UniProtKB-KW"/>
</dbReference>
<dbReference type="CDD" id="cd10206">
    <property type="entry name" value="ASKHA_NBD_Arp8-like"/>
    <property type="match status" value="1"/>
</dbReference>
<dbReference type="FunFam" id="3.30.420.40:FF:000100">
    <property type="entry name" value="Actin-related protein 8"/>
    <property type="match status" value="1"/>
</dbReference>
<dbReference type="FunFam" id="3.30.420.40:FF:000121">
    <property type="entry name" value="Actin-related protein 8"/>
    <property type="match status" value="1"/>
</dbReference>
<dbReference type="FunFam" id="3.90.640.10:FF:000020">
    <property type="entry name" value="Actin-related protein 8"/>
    <property type="match status" value="1"/>
</dbReference>
<dbReference type="Gene3D" id="3.30.420.40">
    <property type="match status" value="2"/>
</dbReference>
<dbReference type="Gene3D" id="3.90.640.10">
    <property type="entry name" value="Actin, Chain A, domain 4"/>
    <property type="match status" value="1"/>
</dbReference>
<dbReference type="InterPro" id="IPR004000">
    <property type="entry name" value="Actin"/>
</dbReference>
<dbReference type="InterPro" id="IPR043129">
    <property type="entry name" value="ATPase_NBD"/>
</dbReference>
<dbReference type="PANTHER" id="PTHR11937">
    <property type="entry name" value="ACTIN"/>
    <property type="match status" value="1"/>
</dbReference>
<dbReference type="Pfam" id="PF00022">
    <property type="entry name" value="Actin"/>
    <property type="match status" value="2"/>
</dbReference>
<dbReference type="SMART" id="SM00268">
    <property type="entry name" value="ACTIN"/>
    <property type="match status" value="1"/>
</dbReference>
<dbReference type="SUPFAM" id="SSF53067">
    <property type="entry name" value="Actin-like ATPase domain"/>
    <property type="match status" value="2"/>
</dbReference>
<organism>
    <name type="scientific">Salmo salar</name>
    <name type="common">Atlantic salmon</name>
    <dbReference type="NCBI Taxonomy" id="8030"/>
    <lineage>
        <taxon>Eukaryota</taxon>
        <taxon>Metazoa</taxon>
        <taxon>Chordata</taxon>
        <taxon>Craniata</taxon>
        <taxon>Vertebrata</taxon>
        <taxon>Euteleostomi</taxon>
        <taxon>Actinopterygii</taxon>
        <taxon>Neopterygii</taxon>
        <taxon>Teleostei</taxon>
        <taxon>Protacanthopterygii</taxon>
        <taxon>Salmoniformes</taxon>
        <taxon>Salmonidae</taxon>
        <taxon>Salmoninae</taxon>
        <taxon>Salmo</taxon>
    </lineage>
</organism>
<reference key="1">
    <citation type="journal article" date="2010" name="BMC Genomics">
        <title>Salmo salar and Esox lucius full-length cDNA sequences reveal changes in evolutionary pressures on a post-tetraploidization genome.</title>
        <authorList>
            <person name="Leong J.S."/>
            <person name="Jantzen S.G."/>
            <person name="von Schalburg K.R."/>
            <person name="Cooper G.A."/>
            <person name="Messmer A.M."/>
            <person name="Liao N.Y."/>
            <person name="Munro S."/>
            <person name="Moore R."/>
            <person name="Holt R.A."/>
            <person name="Jones S.J."/>
            <person name="Davidson W.S."/>
            <person name="Koop B.F."/>
        </authorList>
    </citation>
    <scope>NUCLEOTIDE SEQUENCE [LARGE SCALE MRNA]</scope>
    <source>
        <tissue>Brain</tissue>
    </source>
</reference>
<name>ARP8_SALSA</name>
<feature type="chain" id="PRO_0000403983" description="Actin-related protein 8">
    <location>
        <begin position="1"/>
        <end position="632"/>
    </location>
</feature>
<feature type="region of interest" description="Disordered" evidence="2">
    <location>
        <begin position="1"/>
        <end position="43"/>
    </location>
</feature>
<feature type="region of interest" description="Disordered" evidence="2">
    <location>
        <begin position="410"/>
        <end position="429"/>
    </location>
</feature>
<feature type="region of interest" description="Disordered" evidence="2">
    <location>
        <begin position="434"/>
        <end position="494"/>
    </location>
</feature>
<feature type="compositionally biased region" description="Basic and acidic residues" evidence="2">
    <location>
        <begin position="1"/>
        <end position="30"/>
    </location>
</feature>
<feature type="compositionally biased region" description="Low complexity" evidence="2">
    <location>
        <begin position="434"/>
        <end position="443"/>
    </location>
</feature>
<feature type="binding site" evidence="1">
    <location>
        <begin position="288"/>
        <end position="291"/>
    </location>
    <ligand>
        <name>ATP</name>
        <dbReference type="ChEBI" id="CHEBI:30616"/>
    </ligand>
</feature>
<proteinExistence type="evidence at transcript level"/>
<evidence type="ECO:0000250" key="1"/>
<evidence type="ECO:0000256" key="2">
    <source>
        <dbReference type="SAM" id="MobiDB-lite"/>
    </source>
</evidence>
<evidence type="ECO:0000305" key="3"/>
<comment type="function">
    <text evidence="1">Plays an important role in the functional organization of mitotic chromosomes. Exhibits low basal ATPase activity, and unable to polymerize (By similarity).</text>
</comment>
<comment type="function">
    <text evidence="1">Proposed core component of the chromatin remodeling INO80 complex which is involved in transcriptional regulation, DNA replication and probably DNA repair. Required for the recruitment of INO80 (and probably the INO80 complex) to sites of DNA damage Strongly prefer nucleosomes and H3-H4 tetramers over H2A-H2B dimers, suggesting it may act as a nucleosome recognition module within the complex (By similarity).</text>
</comment>
<comment type="subunit">
    <text evidence="1">Component of the chromatin remodeling INO80 complex; specifically part of a complex module associated with the DBINO domain of INO80. Exists as monomers and dimers, but the dimer is most probably the biologically relevant form required for stable interactions with histones that exploits the twofold symmetry of the nucleosome core (By similarity).</text>
</comment>
<comment type="subcellular location">
    <subcellularLocation>
        <location evidence="1">Nucleus</location>
    </subcellularLocation>
    <subcellularLocation>
        <location evidence="1">Chromosome</location>
    </subcellularLocation>
    <text evidence="1">Specifically localizes to mitotic chromosomes.</text>
</comment>
<comment type="similarity">
    <text evidence="3">Belongs to the actin family. ARP8 subfamily.</text>
</comment>
<gene>
    <name type="primary">actr8</name>
</gene>
<accession>B5X2S3</accession>
<protein>
    <recommendedName>
        <fullName>Actin-related protein 8</fullName>
    </recommendedName>
</protein>